<proteinExistence type="inferred from homology"/>
<dbReference type="EC" id="2.4.1.227" evidence="1"/>
<dbReference type="EMBL" id="CP000769">
    <property type="protein sequence ID" value="ABS28063.1"/>
    <property type="molecule type" value="Genomic_DNA"/>
</dbReference>
<dbReference type="RefSeq" id="WP_012098697.1">
    <property type="nucleotide sequence ID" value="NC_009675.1"/>
</dbReference>
<dbReference type="SMR" id="A7HH67"/>
<dbReference type="STRING" id="404589.Anae109_3884"/>
<dbReference type="CAZy" id="GT28">
    <property type="family name" value="Glycosyltransferase Family 28"/>
</dbReference>
<dbReference type="KEGG" id="afw:Anae109_3884"/>
<dbReference type="eggNOG" id="COG0707">
    <property type="taxonomic scope" value="Bacteria"/>
</dbReference>
<dbReference type="HOGENOM" id="CLU_037404_2_1_7"/>
<dbReference type="OrthoDB" id="9808936at2"/>
<dbReference type="UniPathway" id="UPA00219"/>
<dbReference type="Proteomes" id="UP000006382">
    <property type="component" value="Chromosome"/>
</dbReference>
<dbReference type="GO" id="GO:0005886">
    <property type="term" value="C:plasma membrane"/>
    <property type="evidence" value="ECO:0007669"/>
    <property type="project" value="UniProtKB-SubCell"/>
</dbReference>
<dbReference type="GO" id="GO:0051991">
    <property type="term" value="F:UDP-N-acetyl-D-glucosamine:N-acetylmuramoyl-L-alanyl-D-glutamyl-meso-2,6-diaminopimelyl-D-alanyl-D-alanine-diphosphoundecaprenol 4-beta-N-acetylglucosaminlytransferase activity"/>
    <property type="evidence" value="ECO:0007669"/>
    <property type="project" value="RHEA"/>
</dbReference>
<dbReference type="GO" id="GO:0050511">
    <property type="term" value="F:undecaprenyldiphospho-muramoylpentapeptide beta-N-acetylglucosaminyltransferase activity"/>
    <property type="evidence" value="ECO:0007669"/>
    <property type="project" value="UniProtKB-UniRule"/>
</dbReference>
<dbReference type="GO" id="GO:0005975">
    <property type="term" value="P:carbohydrate metabolic process"/>
    <property type="evidence" value="ECO:0007669"/>
    <property type="project" value="InterPro"/>
</dbReference>
<dbReference type="GO" id="GO:0051301">
    <property type="term" value="P:cell division"/>
    <property type="evidence" value="ECO:0007669"/>
    <property type="project" value="UniProtKB-KW"/>
</dbReference>
<dbReference type="GO" id="GO:0071555">
    <property type="term" value="P:cell wall organization"/>
    <property type="evidence" value="ECO:0007669"/>
    <property type="project" value="UniProtKB-KW"/>
</dbReference>
<dbReference type="GO" id="GO:0030259">
    <property type="term" value="P:lipid glycosylation"/>
    <property type="evidence" value="ECO:0007669"/>
    <property type="project" value="UniProtKB-UniRule"/>
</dbReference>
<dbReference type="GO" id="GO:0009252">
    <property type="term" value="P:peptidoglycan biosynthetic process"/>
    <property type="evidence" value="ECO:0007669"/>
    <property type="project" value="UniProtKB-UniRule"/>
</dbReference>
<dbReference type="GO" id="GO:0008360">
    <property type="term" value="P:regulation of cell shape"/>
    <property type="evidence" value="ECO:0007669"/>
    <property type="project" value="UniProtKB-KW"/>
</dbReference>
<dbReference type="CDD" id="cd03785">
    <property type="entry name" value="GT28_MurG"/>
    <property type="match status" value="1"/>
</dbReference>
<dbReference type="Gene3D" id="3.40.50.2000">
    <property type="entry name" value="Glycogen Phosphorylase B"/>
    <property type="match status" value="2"/>
</dbReference>
<dbReference type="HAMAP" id="MF_00033">
    <property type="entry name" value="MurG"/>
    <property type="match status" value="1"/>
</dbReference>
<dbReference type="InterPro" id="IPR006009">
    <property type="entry name" value="GlcNAc_MurG"/>
</dbReference>
<dbReference type="InterPro" id="IPR007235">
    <property type="entry name" value="Glyco_trans_28_C"/>
</dbReference>
<dbReference type="InterPro" id="IPR004276">
    <property type="entry name" value="GlycoTrans_28_N"/>
</dbReference>
<dbReference type="NCBIfam" id="TIGR01133">
    <property type="entry name" value="murG"/>
    <property type="match status" value="1"/>
</dbReference>
<dbReference type="PANTHER" id="PTHR21015:SF22">
    <property type="entry name" value="GLYCOSYLTRANSFERASE"/>
    <property type="match status" value="1"/>
</dbReference>
<dbReference type="PANTHER" id="PTHR21015">
    <property type="entry name" value="UDP-N-ACETYLGLUCOSAMINE--N-ACETYLMURAMYL-(PENTAPEPTIDE) PYROPHOSPHORYL-UNDECAPRENOL N-ACETYLGLUCOSAMINE TRANSFERASE 1"/>
    <property type="match status" value="1"/>
</dbReference>
<dbReference type="Pfam" id="PF04101">
    <property type="entry name" value="Glyco_tran_28_C"/>
    <property type="match status" value="1"/>
</dbReference>
<dbReference type="Pfam" id="PF03033">
    <property type="entry name" value="Glyco_transf_28"/>
    <property type="match status" value="1"/>
</dbReference>
<dbReference type="SUPFAM" id="SSF53756">
    <property type="entry name" value="UDP-Glycosyltransferase/glycogen phosphorylase"/>
    <property type="match status" value="1"/>
</dbReference>
<keyword id="KW-0131">Cell cycle</keyword>
<keyword id="KW-0132">Cell division</keyword>
<keyword id="KW-0997">Cell inner membrane</keyword>
<keyword id="KW-1003">Cell membrane</keyword>
<keyword id="KW-0133">Cell shape</keyword>
<keyword id="KW-0961">Cell wall biogenesis/degradation</keyword>
<keyword id="KW-0328">Glycosyltransferase</keyword>
<keyword id="KW-0472">Membrane</keyword>
<keyword id="KW-0573">Peptidoglycan synthesis</keyword>
<keyword id="KW-1185">Reference proteome</keyword>
<keyword id="KW-0808">Transferase</keyword>
<name>MURG_ANADF</name>
<reference key="1">
    <citation type="journal article" date="2015" name="Genome Announc.">
        <title>Complete genome sequence of Anaeromyxobacter sp. Fw109-5, an anaerobic, metal-reducing bacterium isolated from a contaminated subsurface environment.</title>
        <authorList>
            <person name="Hwang C."/>
            <person name="Copeland A."/>
            <person name="Lucas S."/>
            <person name="Lapidus A."/>
            <person name="Barry K."/>
            <person name="Glavina Del Rio T."/>
            <person name="Dalin E."/>
            <person name="Tice H."/>
            <person name="Pitluck S."/>
            <person name="Sims D."/>
            <person name="Brettin T."/>
            <person name="Bruce D.C."/>
            <person name="Detter J.C."/>
            <person name="Han C.S."/>
            <person name="Schmutz J."/>
            <person name="Larimer F.W."/>
            <person name="Land M.L."/>
            <person name="Hauser L.J."/>
            <person name="Kyrpides N."/>
            <person name="Lykidis A."/>
            <person name="Richardson P."/>
            <person name="Belieav A."/>
            <person name="Sanford R.A."/>
            <person name="Loeffler F.E."/>
            <person name="Fields M.W."/>
        </authorList>
    </citation>
    <scope>NUCLEOTIDE SEQUENCE [LARGE SCALE GENOMIC DNA]</scope>
    <source>
        <strain>Fw109-5</strain>
    </source>
</reference>
<comment type="function">
    <text evidence="1">Cell wall formation. Catalyzes the transfer of a GlcNAc subunit on undecaprenyl-pyrophosphoryl-MurNAc-pentapeptide (lipid intermediate I) to form undecaprenyl-pyrophosphoryl-MurNAc-(pentapeptide)GlcNAc (lipid intermediate II).</text>
</comment>
<comment type="catalytic activity">
    <reaction evidence="1">
        <text>di-trans,octa-cis-undecaprenyl diphospho-N-acetyl-alpha-D-muramoyl-L-alanyl-D-glutamyl-meso-2,6-diaminopimeloyl-D-alanyl-D-alanine + UDP-N-acetyl-alpha-D-glucosamine = di-trans,octa-cis-undecaprenyl diphospho-[N-acetyl-alpha-D-glucosaminyl-(1-&gt;4)]-N-acetyl-alpha-D-muramoyl-L-alanyl-D-glutamyl-meso-2,6-diaminopimeloyl-D-alanyl-D-alanine + UDP + H(+)</text>
        <dbReference type="Rhea" id="RHEA:31227"/>
        <dbReference type="ChEBI" id="CHEBI:15378"/>
        <dbReference type="ChEBI" id="CHEBI:57705"/>
        <dbReference type="ChEBI" id="CHEBI:58223"/>
        <dbReference type="ChEBI" id="CHEBI:61387"/>
        <dbReference type="ChEBI" id="CHEBI:61388"/>
        <dbReference type="EC" id="2.4.1.227"/>
    </reaction>
</comment>
<comment type="pathway">
    <text evidence="1">Cell wall biogenesis; peptidoglycan biosynthesis.</text>
</comment>
<comment type="subcellular location">
    <subcellularLocation>
        <location evidence="1">Cell inner membrane</location>
        <topology evidence="1">Peripheral membrane protein</topology>
        <orientation evidence="1">Cytoplasmic side</orientation>
    </subcellularLocation>
</comment>
<comment type="similarity">
    <text evidence="1">Belongs to the glycosyltransferase 28 family. MurG subfamily.</text>
</comment>
<sequence>MRMLIAGGGTGGHVFPGIALAEEVVGRHPGNDVVFVGTERGLEAKVVPAAGFPIELIDVKGLKGKGILSLLLNLLLVPRALLQSHRILRKWRPDVVVGVGGYASGPVVLVAWLLRIPTAVQEQNAIAGFTNRVLGRFVDAAFTAFPEAARHFAGRKVYQLGNPIRRTLMENYMRPEVKHPRPRMLVFGGSQGAHALNMRVIEALPHLADLREALAVTHQTGARDREQVEKGYRACGFEPDVREFIHDMSAAYAGADLVVCRAGATTLAELTVCKKPAILVPFPAAADNHQVVNARSLVVAGAAVMIEERDLTGELLAAEIRAILTHPERRERMARAAGRLGSPQAAKEIADVCAELVRRRWGSPAGQERPGHGPVRPPDLA</sequence>
<feature type="chain" id="PRO_1000002613" description="UDP-N-acetylglucosamine--N-acetylmuramyl-(pentapeptide) pyrophosphoryl-undecaprenol N-acetylglucosamine transferase">
    <location>
        <begin position="1"/>
        <end position="381"/>
    </location>
</feature>
<feature type="region of interest" description="Disordered" evidence="2">
    <location>
        <begin position="361"/>
        <end position="381"/>
    </location>
</feature>
<feature type="binding site" evidence="1">
    <location>
        <begin position="10"/>
        <end position="12"/>
    </location>
    <ligand>
        <name>UDP-N-acetyl-alpha-D-glucosamine</name>
        <dbReference type="ChEBI" id="CHEBI:57705"/>
    </ligand>
</feature>
<feature type="binding site" evidence="1">
    <location>
        <position position="124"/>
    </location>
    <ligand>
        <name>UDP-N-acetyl-alpha-D-glucosamine</name>
        <dbReference type="ChEBI" id="CHEBI:57705"/>
    </ligand>
</feature>
<feature type="binding site" evidence="1">
    <location>
        <position position="165"/>
    </location>
    <ligand>
        <name>UDP-N-acetyl-alpha-D-glucosamine</name>
        <dbReference type="ChEBI" id="CHEBI:57705"/>
    </ligand>
</feature>
<feature type="binding site" evidence="1">
    <location>
        <position position="190"/>
    </location>
    <ligand>
        <name>UDP-N-acetyl-alpha-D-glucosamine</name>
        <dbReference type="ChEBI" id="CHEBI:57705"/>
    </ligand>
</feature>
<feature type="binding site" evidence="1">
    <location>
        <position position="245"/>
    </location>
    <ligand>
        <name>UDP-N-acetyl-alpha-D-glucosamine</name>
        <dbReference type="ChEBI" id="CHEBI:57705"/>
    </ligand>
</feature>
<feature type="binding site" evidence="1">
    <location>
        <position position="290"/>
    </location>
    <ligand>
        <name>UDP-N-acetyl-alpha-D-glucosamine</name>
        <dbReference type="ChEBI" id="CHEBI:57705"/>
    </ligand>
</feature>
<accession>A7HH67</accession>
<organism>
    <name type="scientific">Anaeromyxobacter sp. (strain Fw109-5)</name>
    <dbReference type="NCBI Taxonomy" id="404589"/>
    <lineage>
        <taxon>Bacteria</taxon>
        <taxon>Pseudomonadati</taxon>
        <taxon>Myxococcota</taxon>
        <taxon>Myxococcia</taxon>
        <taxon>Myxococcales</taxon>
        <taxon>Cystobacterineae</taxon>
        <taxon>Anaeromyxobacteraceae</taxon>
        <taxon>Anaeromyxobacter</taxon>
    </lineage>
</organism>
<gene>
    <name evidence="1" type="primary">murG</name>
    <name type="ordered locus">Anae109_3884</name>
</gene>
<evidence type="ECO:0000255" key="1">
    <source>
        <dbReference type="HAMAP-Rule" id="MF_00033"/>
    </source>
</evidence>
<evidence type="ECO:0000256" key="2">
    <source>
        <dbReference type="SAM" id="MobiDB-lite"/>
    </source>
</evidence>
<protein>
    <recommendedName>
        <fullName evidence="1">UDP-N-acetylglucosamine--N-acetylmuramyl-(pentapeptide) pyrophosphoryl-undecaprenol N-acetylglucosamine transferase</fullName>
        <ecNumber evidence="1">2.4.1.227</ecNumber>
    </recommendedName>
    <alternativeName>
        <fullName evidence="1">Undecaprenyl-PP-MurNAc-pentapeptide-UDPGlcNAc GlcNAc transferase</fullName>
    </alternativeName>
</protein>